<reference key="1">
    <citation type="journal article" date="1995" name="Science">
        <title>Whole-genome random sequencing and assembly of Haemophilus influenzae Rd.</title>
        <authorList>
            <person name="Fleischmann R.D."/>
            <person name="Adams M.D."/>
            <person name="White O."/>
            <person name="Clayton R.A."/>
            <person name="Kirkness E.F."/>
            <person name="Kerlavage A.R."/>
            <person name="Bult C.J."/>
            <person name="Tomb J.-F."/>
            <person name="Dougherty B.A."/>
            <person name="Merrick J.M."/>
            <person name="McKenney K."/>
            <person name="Sutton G.G."/>
            <person name="FitzHugh W."/>
            <person name="Fields C.A."/>
            <person name="Gocayne J.D."/>
            <person name="Scott J.D."/>
            <person name="Shirley R."/>
            <person name="Liu L.-I."/>
            <person name="Glodek A."/>
            <person name="Kelley J.M."/>
            <person name="Weidman J.F."/>
            <person name="Phillips C.A."/>
            <person name="Spriggs T."/>
            <person name="Hedblom E."/>
            <person name="Cotton M.D."/>
            <person name="Utterback T.R."/>
            <person name="Hanna M.C."/>
            <person name="Nguyen D.T."/>
            <person name="Saudek D.M."/>
            <person name="Brandon R.C."/>
            <person name="Fine L.D."/>
            <person name="Fritchman J.L."/>
            <person name="Fuhrmann J.L."/>
            <person name="Geoghagen N.S.M."/>
            <person name="Gnehm C.L."/>
            <person name="McDonald L.A."/>
            <person name="Small K.V."/>
            <person name="Fraser C.M."/>
            <person name="Smith H.O."/>
            <person name="Venter J.C."/>
        </authorList>
    </citation>
    <scope>NUCLEOTIDE SEQUENCE [LARGE SCALE GENOMIC DNA]</scope>
    <source>
        <strain>ATCC 51907 / DSM 11121 / KW20 / Rd</strain>
    </source>
</reference>
<gene>
    <name type="primary">nrdG</name>
    <name type="ordered locus">HI_1155</name>
</gene>
<proteinExistence type="inferred from homology"/>
<feature type="chain" id="PRO_0000200537" description="Anaerobic ribonucleoside-triphosphate reductase-activating protein">
    <location>
        <begin position="1"/>
        <end position="155"/>
    </location>
</feature>
<feature type="binding site" evidence="1">
    <location>
        <position position="26"/>
    </location>
    <ligand>
        <name>[4Fe-4S] cluster</name>
        <dbReference type="ChEBI" id="CHEBI:49883"/>
        <note>4Fe-4S-S-AdoMet</note>
    </ligand>
</feature>
<feature type="binding site" evidence="1">
    <location>
        <position position="30"/>
    </location>
    <ligand>
        <name>[4Fe-4S] cluster</name>
        <dbReference type="ChEBI" id="CHEBI:49883"/>
        <note>4Fe-4S-S-AdoMet</note>
    </ligand>
</feature>
<feature type="binding site" evidence="1">
    <location>
        <begin position="32"/>
        <end position="34"/>
    </location>
    <ligand>
        <name>S-adenosyl-L-methionine</name>
        <dbReference type="ChEBI" id="CHEBI:59789"/>
    </ligand>
</feature>
<feature type="binding site" evidence="1">
    <location>
        <position position="33"/>
    </location>
    <ligand>
        <name>[4Fe-4S] cluster</name>
        <dbReference type="ChEBI" id="CHEBI:49883"/>
        <note>4Fe-4S-S-AdoMet</note>
    </ligand>
</feature>
<feature type="binding site" evidence="1">
    <location>
        <position position="74"/>
    </location>
    <ligand>
        <name>S-adenosyl-L-methionine</name>
        <dbReference type="ChEBI" id="CHEBI:59789"/>
    </ligand>
</feature>
<keyword id="KW-0004">4Fe-4S</keyword>
<keyword id="KW-0963">Cytoplasm</keyword>
<keyword id="KW-0408">Iron</keyword>
<keyword id="KW-0411">Iron-sulfur</keyword>
<keyword id="KW-0479">Metal-binding</keyword>
<keyword id="KW-0560">Oxidoreductase</keyword>
<keyword id="KW-1185">Reference proteome</keyword>
<keyword id="KW-0949">S-adenosyl-L-methionine</keyword>
<name>NRDG_HAEIN</name>
<dbReference type="EC" id="1.97.1.-" evidence="2"/>
<dbReference type="EMBL" id="L42023">
    <property type="protein sequence ID" value="AAC22810.1"/>
    <property type="molecule type" value="Genomic_DNA"/>
</dbReference>
<dbReference type="PIR" id="E64168">
    <property type="entry name" value="E64168"/>
</dbReference>
<dbReference type="RefSeq" id="NP_439313.1">
    <property type="nucleotide sequence ID" value="NC_000907.1"/>
</dbReference>
<dbReference type="SMR" id="P45080"/>
<dbReference type="STRING" id="71421.HI_1155"/>
<dbReference type="EnsemblBacteria" id="AAC22810">
    <property type="protein sequence ID" value="AAC22810"/>
    <property type="gene ID" value="HI_1155"/>
</dbReference>
<dbReference type="KEGG" id="hin:HI_1155"/>
<dbReference type="PATRIC" id="fig|71421.8.peg.1206"/>
<dbReference type="eggNOG" id="COG0602">
    <property type="taxonomic scope" value="Bacteria"/>
</dbReference>
<dbReference type="HOGENOM" id="CLU_089926_2_1_6"/>
<dbReference type="OrthoDB" id="9782387at2"/>
<dbReference type="PhylomeDB" id="P45080"/>
<dbReference type="BioCyc" id="HINF71421:G1GJ1-1188-MONOMER"/>
<dbReference type="Proteomes" id="UP000000579">
    <property type="component" value="Chromosome"/>
</dbReference>
<dbReference type="GO" id="GO:0005737">
    <property type="term" value="C:cytoplasm"/>
    <property type="evidence" value="ECO:0007669"/>
    <property type="project" value="UniProtKB-SubCell"/>
</dbReference>
<dbReference type="GO" id="GO:0051539">
    <property type="term" value="F:4 iron, 4 sulfur cluster binding"/>
    <property type="evidence" value="ECO:0007669"/>
    <property type="project" value="UniProtKB-KW"/>
</dbReference>
<dbReference type="GO" id="GO:0043365">
    <property type="term" value="F:[formate-C-acetyltransferase]-activating enzyme activity"/>
    <property type="evidence" value="ECO:0007669"/>
    <property type="project" value="InterPro"/>
</dbReference>
<dbReference type="GO" id="GO:0046872">
    <property type="term" value="F:metal ion binding"/>
    <property type="evidence" value="ECO:0007669"/>
    <property type="project" value="UniProtKB-KW"/>
</dbReference>
<dbReference type="CDD" id="cd01335">
    <property type="entry name" value="Radical_SAM"/>
    <property type="match status" value="1"/>
</dbReference>
<dbReference type="Gene3D" id="3.20.20.70">
    <property type="entry name" value="Aldolase class I"/>
    <property type="match status" value="1"/>
</dbReference>
<dbReference type="InterPro" id="IPR013785">
    <property type="entry name" value="Aldolase_TIM"/>
</dbReference>
<dbReference type="InterPro" id="IPR012837">
    <property type="entry name" value="NrdG"/>
</dbReference>
<dbReference type="InterPro" id="IPR034457">
    <property type="entry name" value="Organic_radical-activating"/>
</dbReference>
<dbReference type="InterPro" id="IPR001989">
    <property type="entry name" value="Radical_activat_CS"/>
</dbReference>
<dbReference type="InterPro" id="IPR007197">
    <property type="entry name" value="rSAM"/>
</dbReference>
<dbReference type="NCBIfam" id="TIGR02491">
    <property type="entry name" value="NrdG"/>
    <property type="match status" value="1"/>
</dbReference>
<dbReference type="NCBIfam" id="NF008335">
    <property type="entry name" value="PRK11121.1"/>
    <property type="match status" value="1"/>
</dbReference>
<dbReference type="PANTHER" id="PTHR30352:SF2">
    <property type="entry name" value="ANAEROBIC RIBONUCLEOSIDE-TRIPHOSPHATE REDUCTASE-ACTIVATING PROTEIN"/>
    <property type="match status" value="1"/>
</dbReference>
<dbReference type="PANTHER" id="PTHR30352">
    <property type="entry name" value="PYRUVATE FORMATE-LYASE-ACTIVATING ENZYME"/>
    <property type="match status" value="1"/>
</dbReference>
<dbReference type="Pfam" id="PF13353">
    <property type="entry name" value="Fer4_12"/>
    <property type="match status" value="1"/>
</dbReference>
<dbReference type="PIRSF" id="PIRSF000368">
    <property type="entry name" value="NrdG"/>
    <property type="match status" value="1"/>
</dbReference>
<dbReference type="SFLD" id="SFLDF00299">
    <property type="entry name" value="anaerobic_ribonucleoside-triph"/>
    <property type="match status" value="1"/>
</dbReference>
<dbReference type="SFLD" id="SFLDS00029">
    <property type="entry name" value="Radical_SAM"/>
    <property type="match status" value="1"/>
</dbReference>
<dbReference type="SUPFAM" id="SSF102114">
    <property type="entry name" value="Radical SAM enzymes"/>
    <property type="match status" value="1"/>
</dbReference>
<dbReference type="PROSITE" id="PS01087">
    <property type="entry name" value="RADICAL_ACTIVATING"/>
    <property type="match status" value="1"/>
</dbReference>
<protein>
    <recommendedName>
        <fullName evidence="2">Anaerobic ribonucleoside-triphosphate reductase-activating protein</fullName>
        <ecNumber evidence="2">1.97.1.-</ecNumber>
    </recommendedName>
    <alternativeName>
        <fullName evidence="2">Class III anaerobic ribonucleotide reductase small component</fullName>
    </alternativeName>
</protein>
<evidence type="ECO:0000250" key="1">
    <source>
        <dbReference type="UniProtKB" id="P0A9N4"/>
    </source>
</evidence>
<evidence type="ECO:0000250" key="2">
    <source>
        <dbReference type="UniProtKB" id="P0A9N8"/>
    </source>
</evidence>
<evidence type="ECO:0000305" key="3"/>
<sequence>MNYLQYYPTDVINGEGTRCTLFVSGCTHACKGCYNQKSWSFSAGVLFDDVMEQQIINDLKDTRIKRQGLTLSGGDPLHPLNVETLLPFVQRVKRECPDKDIWVWTGYKLDELDKQQRAMLPYIDVLIDGKFIQEQADPSLVWRGSANQIIHRFKL</sequence>
<comment type="function">
    <text evidence="2">Activation of anaerobic ribonucleoside-triphosphate reductase under anaerobic conditions by generation of an organic free radical, using S-adenosylmethionine and reduced flavodoxin as cosubstrates to produce 5'-deoxy-adenosine.</text>
</comment>
<comment type="catalytic activity">
    <reaction evidence="2">
        <text>glycyl-[protein] + reduced [flavodoxin] + S-adenosyl-L-methionine = glycin-2-yl radical-[protein] + semiquinone [flavodoxin] + 5'-deoxyadenosine + L-methionine + H(+)</text>
        <dbReference type="Rhea" id="RHEA:61976"/>
        <dbReference type="Rhea" id="RHEA-COMP:10622"/>
        <dbReference type="Rhea" id="RHEA-COMP:14480"/>
        <dbReference type="Rhea" id="RHEA-COMP:15993"/>
        <dbReference type="Rhea" id="RHEA-COMP:15994"/>
        <dbReference type="ChEBI" id="CHEBI:15378"/>
        <dbReference type="ChEBI" id="CHEBI:17319"/>
        <dbReference type="ChEBI" id="CHEBI:29947"/>
        <dbReference type="ChEBI" id="CHEBI:32722"/>
        <dbReference type="ChEBI" id="CHEBI:57618"/>
        <dbReference type="ChEBI" id="CHEBI:57844"/>
        <dbReference type="ChEBI" id="CHEBI:59789"/>
        <dbReference type="ChEBI" id="CHEBI:140311"/>
    </reaction>
</comment>
<comment type="cofactor">
    <cofactor evidence="2">
        <name>[4Fe-4S] cluster</name>
        <dbReference type="ChEBI" id="CHEBI:49883"/>
    </cofactor>
    <text evidence="1">Binds 1 [4Fe-4S] cluster. The cluster is coordinated with 3 cysteines and an exchangeable S-adenosyl-L-methionine.</text>
</comment>
<comment type="subunit">
    <text evidence="2">Forms a tetramer composed of two NrdD and two NrdG subunits.</text>
</comment>
<comment type="subcellular location">
    <subcellularLocation>
        <location evidence="2">Cytoplasm</location>
    </subcellularLocation>
</comment>
<comment type="similarity">
    <text evidence="3">Belongs to the organic radical-activating enzymes family.</text>
</comment>
<accession>P45080</accession>
<organism>
    <name type="scientific">Haemophilus influenzae (strain ATCC 51907 / DSM 11121 / KW20 / Rd)</name>
    <dbReference type="NCBI Taxonomy" id="71421"/>
    <lineage>
        <taxon>Bacteria</taxon>
        <taxon>Pseudomonadati</taxon>
        <taxon>Pseudomonadota</taxon>
        <taxon>Gammaproteobacteria</taxon>
        <taxon>Pasteurellales</taxon>
        <taxon>Pasteurellaceae</taxon>
        <taxon>Haemophilus</taxon>
    </lineage>
</organism>